<gene>
    <name type="primary">flaB2</name>
</gene>
<feature type="chain" id="PRO_0000182640" description="Flagellar filament 31.3 kDa core protein">
    <location>
        <begin position="1"/>
        <end position="286"/>
    </location>
</feature>
<reference key="1">
    <citation type="journal article" date="2000" name="Microbiology">
        <title>A flagellar gene cluster from the oral spirochaete Treponema maltophilum.</title>
        <authorList>
            <person name="Heuner K."/>
            <person name="Grosse K."/>
            <person name="Schade R."/>
            <person name="Goebel U.B."/>
        </authorList>
    </citation>
    <scope>NUCLEOTIDE SEQUENCE [GENOMIC DNA]</scope>
    <source>
        <strain>ATCC 51939 / DSM 27366 / CIP 105146 / OMZ 679 / BR</strain>
    </source>
</reference>
<reference key="2">
    <citation type="journal article" date="1998" name="Infect. Immun.">
        <title>Flagellins, but not endoflagellar sheath proteins, of Treponema pallidum and of pathogen-related oral spirochetes are glycosylated.</title>
        <authorList>
            <person name="Wyss C."/>
        </authorList>
    </citation>
    <scope>GLYCOSYLATION</scope>
</reference>
<comment type="function">
    <text>Component of the core of the flagella.</text>
</comment>
<comment type="subunit">
    <text>The core of the flagellum consists of several antigenically related polypeptides.</text>
</comment>
<comment type="subcellular location">
    <subcellularLocation>
        <location>Periplasmic flagellum</location>
    </subcellularLocation>
    <subcellularLocation>
        <location>Periplasm</location>
    </subcellularLocation>
</comment>
<comment type="PTM">
    <text evidence="1">Glycosylated. Glycosylation is not essential for motility.</text>
</comment>
<comment type="similarity">
    <text evidence="2">Belongs to the bacterial flagellin family.</text>
</comment>
<sequence length="286" mass="31251">MIINHNMSAMYSNRVLGVTNLAQAKDMEKLSSGMKINRAGDDASGLAVSEKMRSQIRGLNQASRNAQNGISFIQVSEGYLQETTDIMHRIRELAVQSSNGIYSDEDRMQIQVEVSQLVAEVDRIASHAQFNGMNMLTGRFARATGENTVTGSMWLHIGANMDQRMQVFIGTMTAMAVGVREIGSEKVMSIAAPDDANRAIGTIDEGLKKINKQRADLGAYQNRLEMTVKGLDVAAENTQAAESTIRDTDMAKQMVDFTKNRILAQAGTAMLAQANVTTQNVLTLLQ</sequence>
<accession>Q9KWX0</accession>
<dbReference type="EMBL" id="Y18889">
    <property type="protein sequence ID" value="CAB67249.1"/>
    <property type="molecule type" value="Genomic_DNA"/>
</dbReference>
<dbReference type="SMR" id="Q9KWX0"/>
<dbReference type="GO" id="GO:0055040">
    <property type="term" value="C:periplasmic flagellum"/>
    <property type="evidence" value="ECO:0007669"/>
    <property type="project" value="UniProtKB-SubCell"/>
</dbReference>
<dbReference type="GO" id="GO:0005198">
    <property type="term" value="F:structural molecule activity"/>
    <property type="evidence" value="ECO:0007669"/>
    <property type="project" value="InterPro"/>
</dbReference>
<dbReference type="Gene3D" id="1.20.1330.10">
    <property type="entry name" value="f41 fragment of flagellin, N-terminal domain"/>
    <property type="match status" value="1"/>
</dbReference>
<dbReference type="Gene3D" id="6.10.10.10">
    <property type="entry name" value="Flagellar export chaperone, C-terminal domain"/>
    <property type="match status" value="1"/>
</dbReference>
<dbReference type="InterPro" id="IPR001492">
    <property type="entry name" value="Flagellin"/>
</dbReference>
<dbReference type="InterPro" id="IPR046358">
    <property type="entry name" value="Flagellin_C"/>
</dbReference>
<dbReference type="InterPro" id="IPR042187">
    <property type="entry name" value="Flagellin_C_sub2"/>
</dbReference>
<dbReference type="InterPro" id="IPR001029">
    <property type="entry name" value="Flagellin_N"/>
</dbReference>
<dbReference type="PANTHER" id="PTHR42792">
    <property type="entry name" value="FLAGELLIN"/>
    <property type="match status" value="1"/>
</dbReference>
<dbReference type="PANTHER" id="PTHR42792:SF2">
    <property type="entry name" value="FLAGELLIN"/>
    <property type="match status" value="1"/>
</dbReference>
<dbReference type="Pfam" id="PF00700">
    <property type="entry name" value="Flagellin_C"/>
    <property type="match status" value="1"/>
</dbReference>
<dbReference type="Pfam" id="PF00669">
    <property type="entry name" value="Flagellin_N"/>
    <property type="match status" value="1"/>
</dbReference>
<dbReference type="PRINTS" id="PR00207">
    <property type="entry name" value="FLAGELLIN"/>
</dbReference>
<dbReference type="SUPFAM" id="SSF64518">
    <property type="entry name" value="Phase 1 flagellin"/>
    <property type="match status" value="1"/>
</dbReference>
<proteinExistence type="evidence at protein level"/>
<name>FLAB2_TREMA</name>
<protein>
    <recommendedName>
        <fullName>Flagellar filament 31.3 kDa core protein</fullName>
    </recommendedName>
    <alternativeName>
        <fullName>Flagellin subunit protein B2</fullName>
    </alternativeName>
</protein>
<keyword id="KW-0975">Bacterial flagellum</keyword>
<keyword id="KW-0325">Glycoprotein</keyword>
<keyword id="KW-0574">Periplasm</keyword>
<evidence type="ECO:0000269" key="1">
    <source>
    </source>
</evidence>
<evidence type="ECO:0000305" key="2"/>
<organism>
    <name type="scientific">Treponema maltophilum</name>
    <dbReference type="NCBI Taxonomy" id="51160"/>
    <lineage>
        <taxon>Bacteria</taxon>
        <taxon>Pseudomonadati</taxon>
        <taxon>Spirochaetota</taxon>
        <taxon>Spirochaetia</taxon>
        <taxon>Spirochaetales</taxon>
        <taxon>Treponemataceae</taxon>
        <taxon>Treponema</taxon>
    </lineage>
</organism>